<accession>P09032</accession>
<accession>D6W2W1</accession>
<accession>Q08721</accession>
<reference key="1">
    <citation type="journal article" date="1988" name="Nucleic Acids Res.">
        <title>Molecular characterization of GCD1, a yeast gene required for general control of amino acid biosynthesis and cell-cycle initiation.</title>
        <authorList>
            <person name="Hill D.E."/>
            <person name="Struhl K."/>
        </authorList>
    </citation>
    <scope>NUCLEOTIDE SEQUENCE [GENOMIC DNA]</scope>
</reference>
<reference key="2">
    <citation type="submission" date="1994-11" db="UniProtKB">
        <authorList>
            <person name="Cigan A.M."/>
            <person name="Pavitt G."/>
        </authorList>
    </citation>
    <scope>SEQUENCE REVISION TO C-TERMINUS</scope>
</reference>
<reference key="3">
    <citation type="journal article" date="1997" name="Yeast">
        <title>Sequencing analysis of a 36.8 kb fragment of yeast chromosome XV reveals 26 open reading frames including SEC63, CDC31, SUG2, GCD1, RBL2, PNT1, PAC1 and VPH1.</title>
        <authorList>
            <person name="Poirey R."/>
            <person name="Jauniaux J.-C."/>
        </authorList>
    </citation>
    <scope>NUCLEOTIDE SEQUENCE [GENOMIC DNA]</scope>
    <source>
        <strain>ATCC 96604 / S288c / FY1679</strain>
    </source>
</reference>
<reference key="4">
    <citation type="journal article" date="1997" name="Nature">
        <title>The nucleotide sequence of Saccharomyces cerevisiae chromosome XV.</title>
        <authorList>
            <person name="Dujon B."/>
            <person name="Albermann K."/>
            <person name="Aldea M."/>
            <person name="Alexandraki D."/>
            <person name="Ansorge W."/>
            <person name="Arino J."/>
            <person name="Benes V."/>
            <person name="Bohn C."/>
            <person name="Bolotin-Fukuhara M."/>
            <person name="Bordonne R."/>
            <person name="Boyer J."/>
            <person name="Camasses A."/>
            <person name="Casamayor A."/>
            <person name="Casas C."/>
            <person name="Cheret G."/>
            <person name="Cziepluch C."/>
            <person name="Daignan-Fornier B."/>
            <person name="Dang V.-D."/>
            <person name="de Haan M."/>
            <person name="Delius H."/>
            <person name="Durand P."/>
            <person name="Fairhead C."/>
            <person name="Feldmann H."/>
            <person name="Gaillon L."/>
            <person name="Galisson F."/>
            <person name="Gamo F.-J."/>
            <person name="Gancedo C."/>
            <person name="Goffeau A."/>
            <person name="Goulding S.E."/>
            <person name="Grivell L.A."/>
            <person name="Habbig B."/>
            <person name="Hand N.J."/>
            <person name="Hani J."/>
            <person name="Hattenhorst U."/>
            <person name="Hebling U."/>
            <person name="Hernando Y."/>
            <person name="Herrero E."/>
            <person name="Heumann K."/>
            <person name="Hiesel R."/>
            <person name="Hilger F."/>
            <person name="Hofmann B."/>
            <person name="Hollenberg C.P."/>
            <person name="Hughes B."/>
            <person name="Jauniaux J.-C."/>
            <person name="Kalogeropoulos A."/>
            <person name="Katsoulou C."/>
            <person name="Kordes E."/>
            <person name="Lafuente M.J."/>
            <person name="Landt O."/>
            <person name="Louis E.J."/>
            <person name="Maarse A.C."/>
            <person name="Madania A."/>
            <person name="Mannhaupt G."/>
            <person name="Marck C."/>
            <person name="Martin R.P."/>
            <person name="Mewes H.-W."/>
            <person name="Michaux G."/>
            <person name="Paces V."/>
            <person name="Parle-McDermott A.G."/>
            <person name="Pearson B.M."/>
            <person name="Perrin A."/>
            <person name="Pettersson B."/>
            <person name="Poch O."/>
            <person name="Pohl T.M."/>
            <person name="Poirey R."/>
            <person name="Portetelle D."/>
            <person name="Pujol A."/>
            <person name="Purnelle B."/>
            <person name="Ramezani Rad M."/>
            <person name="Rechmann S."/>
            <person name="Schwager C."/>
            <person name="Schweizer M."/>
            <person name="Sor F."/>
            <person name="Sterky F."/>
            <person name="Tarassov I.A."/>
            <person name="Teodoru C."/>
            <person name="Tettelin H."/>
            <person name="Thierry A."/>
            <person name="Tobiasch E."/>
            <person name="Tzermia M."/>
            <person name="Uhlen M."/>
            <person name="Unseld M."/>
            <person name="Valens M."/>
            <person name="Vandenbol M."/>
            <person name="Vetter I."/>
            <person name="Vlcek C."/>
            <person name="Voet M."/>
            <person name="Volckaert G."/>
            <person name="Voss H."/>
            <person name="Wambutt R."/>
            <person name="Wedler H."/>
            <person name="Wiemann S."/>
            <person name="Winsor B."/>
            <person name="Wolfe K.H."/>
            <person name="Zollner A."/>
            <person name="Zumstein E."/>
            <person name="Kleine K."/>
        </authorList>
    </citation>
    <scope>NUCLEOTIDE SEQUENCE [LARGE SCALE GENOMIC DNA]</scope>
    <source>
        <strain>ATCC 204508 / S288c</strain>
    </source>
</reference>
<reference key="5">
    <citation type="journal article" date="2014" name="G3 (Bethesda)">
        <title>The reference genome sequence of Saccharomyces cerevisiae: Then and now.</title>
        <authorList>
            <person name="Engel S.R."/>
            <person name="Dietrich F.S."/>
            <person name="Fisk D.G."/>
            <person name="Binkley G."/>
            <person name="Balakrishnan R."/>
            <person name="Costanzo M.C."/>
            <person name="Dwight S.S."/>
            <person name="Hitz B.C."/>
            <person name="Karra K."/>
            <person name="Nash R.S."/>
            <person name="Weng S."/>
            <person name="Wong E.D."/>
            <person name="Lloyd P."/>
            <person name="Skrzypek M.S."/>
            <person name="Miyasato S.R."/>
            <person name="Simison M."/>
            <person name="Cherry J.M."/>
        </authorList>
    </citation>
    <scope>GENOME REANNOTATION</scope>
    <source>
        <strain>ATCC 204508 / S288c</strain>
    </source>
</reference>
<reference key="6">
    <citation type="journal article" date="1993" name="Proc. Natl. Acad. Sci. U.S.A.">
        <title>A protein complex of translational regulators of GCN4 mRNA is the guanine nucleotide-exchange factor for translation initiation factor 2 in yeast.</title>
        <authorList>
            <person name="Cigan A.M."/>
            <person name="Bushman J.L."/>
            <person name="Boal T.R."/>
            <person name="Hinnebusch A.G."/>
        </authorList>
    </citation>
    <scope>IDENTIFICATION IN THE EIF2-B COMPLEX</scope>
    <scope>FUNCTION OF THE EIF2-B COMPLEX</scope>
</reference>
<reference key="7">
    <citation type="journal article" date="1998" name="Genes Dev.">
        <title>eIF2 independently binds two distinct eIF2B subcomplexes that catalyze and regulate guanine-nucleotide exchange.</title>
        <authorList>
            <person name="Pavitt G.D."/>
            <person name="Ramaiah K.V."/>
            <person name="Kimball S.R."/>
            <person name="Hinnebusch A.G."/>
        </authorList>
    </citation>
    <scope>FUNCTION</scope>
    <scope>IDENTIFICATION IN A EIF2-B SUBCOMPLEX</scope>
</reference>
<reference key="8">
    <citation type="journal article" date="2003" name="Nature">
        <title>Global analysis of protein expression in yeast.</title>
        <authorList>
            <person name="Ghaemmaghami S."/>
            <person name="Huh W.-K."/>
            <person name="Bower K."/>
            <person name="Howson R.W."/>
            <person name="Belle A."/>
            <person name="Dephoure N."/>
            <person name="O'Shea E.K."/>
            <person name="Weissman J.S."/>
        </authorList>
    </citation>
    <scope>LEVEL OF PROTEIN EXPRESSION [LARGE SCALE ANALYSIS]</scope>
</reference>
<reference key="9">
    <citation type="journal article" date="2007" name="Proc. Natl. Acad. Sci. U.S.A.">
        <title>Analysis of phosphorylation sites on proteins from Saccharomyces cerevisiae by electron transfer dissociation (ETD) mass spectrometry.</title>
        <authorList>
            <person name="Chi A."/>
            <person name="Huttenhower C."/>
            <person name="Geer L.Y."/>
            <person name="Coon J.J."/>
            <person name="Syka J.E.P."/>
            <person name="Bai D.L."/>
            <person name="Shabanowitz J."/>
            <person name="Burke D.J."/>
            <person name="Troyanskaya O.G."/>
            <person name="Hunt D.F."/>
        </authorList>
    </citation>
    <scope>PHOSPHORYLATION [LARGE SCALE ANALYSIS] AT SER-296 AND SER-300</scope>
    <scope>IDENTIFICATION BY MASS SPECTROMETRY [LARGE SCALE ANALYSIS]</scope>
</reference>
<reference key="10">
    <citation type="journal article" date="2008" name="Mol. Cell. Proteomics">
        <title>A multidimensional chromatography technology for in-depth phosphoproteome analysis.</title>
        <authorList>
            <person name="Albuquerque C.P."/>
            <person name="Smolka M.B."/>
            <person name="Payne S.H."/>
            <person name="Bafna V."/>
            <person name="Eng J."/>
            <person name="Zhou H."/>
        </authorList>
    </citation>
    <scope>IDENTIFICATION BY MASS SPECTROMETRY [LARGE SCALE ANALYSIS]</scope>
</reference>
<reference key="11">
    <citation type="journal article" date="2009" name="Science">
        <title>Global analysis of Cdk1 substrate phosphorylation sites provides insights into evolution.</title>
        <authorList>
            <person name="Holt L.J."/>
            <person name="Tuch B.B."/>
            <person name="Villen J."/>
            <person name="Johnson A.D."/>
            <person name="Gygi S.P."/>
            <person name="Morgan D.O."/>
        </authorList>
    </citation>
    <scope>PHOSPHORYLATION [LARGE SCALE ANALYSIS] AT THR-306</scope>
    <scope>IDENTIFICATION BY MASS SPECTROMETRY [LARGE SCALE ANALYSIS]</scope>
</reference>
<reference key="12">
    <citation type="journal article" date="2013" name="J. Biol. Chem.">
        <title>Translation initiation requires cell division cycle 123 (Cdc123) to facilitate biogenesis of the eukaryotic initiation factor 2 (eIF2).</title>
        <authorList>
            <person name="Perzlmaier A.F."/>
            <person name="Richter F."/>
            <person name="Seufert W."/>
        </authorList>
    </citation>
    <scope>INTERACTION WITH GCD11; SUI2 AND SUI3</scope>
</reference>
<keyword id="KW-0002">3D-structure</keyword>
<keyword id="KW-0963">Cytoplasm</keyword>
<keyword id="KW-0396">Initiation factor</keyword>
<keyword id="KW-0597">Phosphoprotein</keyword>
<keyword id="KW-0648">Protein biosynthesis</keyword>
<keyword id="KW-1185">Reference proteome</keyword>
<keyword id="KW-0810">Translation regulation</keyword>
<evidence type="ECO:0000250" key="1">
    <source>
        <dbReference type="UniProtKB" id="P56288"/>
    </source>
</evidence>
<evidence type="ECO:0000256" key="2">
    <source>
        <dbReference type="SAM" id="MobiDB-lite"/>
    </source>
</evidence>
<evidence type="ECO:0000269" key="3">
    <source>
    </source>
</evidence>
<evidence type="ECO:0000269" key="4">
    <source>
    </source>
</evidence>
<evidence type="ECO:0000269" key="5">
    <source>
    </source>
</evidence>
<evidence type="ECO:0000269" key="6">
    <source>
    </source>
</evidence>
<evidence type="ECO:0000305" key="7"/>
<evidence type="ECO:0007744" key="8">
    <source>
    </source>
</evidence>
<evidence type="ECO:0007744" key="9">
    <source>
    </source>
</evidence>
<organism>
    <name type="scientific">Saccharomyces cerevisiae (strain ATCC 204508 / S288c)</name>
    <name type="common">Baker's yeast</name>
    <dbReference type="NCBI Taxonomy" id="559292"/>
    <lineage>
        <taxon>Eukaryota</taxon>
        <taxon>Fungi</taxon>
        <taxon>Dikarya</taxon>
        <taxon>Ascomycota</taxon>
        <taxon>Saccharomycotina</taxon>
        <taxon>Saccharomycetes</taxon>
        <taxon>Saccharomycetales</taxon>
        <taxon>Saccharomycetaceae</taxon>
        <taxon>Saccharomyces</taxon>
    </lineage>
</organism>
<feature type="chain" id="PRO_0000156083" description="Translation initiation factor eIF2B subunit gamma">
    <location>
        <begin position="1"/>
        <end position="578"/>
    </location>
</feature>
<feature type="region of interest" description="Disordered" evidence="2">
    <location>
        <begin position="298"/>
        <end position="337"/>
    </location>
</feature>
<feature type="region of interest" description="Disordered" evidence="2">
    <location>
        <begin position="535"/>
        <end position="578"/>
    </location>
</feature>
<feature type="compositionally biased region" description="Acidic residues" evidence="2">
    <location>
        <begin position="544"/>
        <end position="578"/>
    </location>
</feature>
<feature type="modified residue" description="Phosphoserine" evidence="8">
    <location>
        <position position="296"/>
    </location>
</feature>
<feature type="modified residue" description="Phosphoserine" evidence="8">
    <location>
        <position position="300"/>
    </location>
</feature>
<feature type="modified residue" description="Phosphothreonine" evidence="9">
    <location>
        <position position="306"/>
    </location>
</feature>
<feature type="sequence conflict" description="In Ref. 1; CAA30693." evidence="7" ref="1">
    <original>QKQQQFFTVYSENEDSERQPILLD</original>
    <variation>AKNNSNFSLFIQKTKTQRGSQYFWN</variation>
    <location>
        <begin position="217"/>
        <end position="240"/>
    </location>
</feature>
<feature type="sequence conflict" description="In Ref. 1; CAA30693." evidence="7" ref="1">
    <original>IG</original>
    <variation>SV</variation>
    <location>
        <begin position="491"/>
        <end position="492"/>
    </location>
</feature>
<proteinExistence type="evidence at protein level"/>
<dbReference type="EMBL" id="X07846">
    <property type="protein sequence ID" value="CAA30693.1"/>
    <property type="status" value="ALT_FRAME"/>
    <property type="molecule type" value="Genomic_DNA"/>
</dbReference>
<dbReference type="EMBL" id="Z75168">
    <property type="protein sequence ID" value="CAA99482.1"/>
    <property type="molecule type" value="Genomic_DNA"/>
</dbReference>
<dbReference type="EMBL" id="BK006948">
    <property type="protein sequence ID" value="DAA11027.1"/>
    <property type="molecule type" value="Genomic_DNA"/>
</dbReference>
<dbReference type="PIR" id="S67157">
    <property type="entry name" value="BVBYD1"/>
</dbReference>
<dbReference type="RefSeq" id="NP_014903.1">
    <property type="nucleotide sequence ID" value="NM_001183679.1"/>
</dbReference>
<dbReference type="PDB" id="6I3M">
    <property type="method" value="EM"/>
    <property type="resolution" value="3.93 A"/>
    <property type="chains" value="I/J=1-578"/>
</dbReference>
<dbReference type="PDB" id="6I7T">
    <property type="method" value="EM"/>
    <property type="resolution" value="4.61 A"/>
    <property type="chains" value="I/J=1-578"/>
</dbReference>
<dbReference type="PDB" id="6QG0">
    <property type="method" value="EM"/>
    <property type="resolution" value="4.20 A"/>
    <property type="chains" value="E/F=1-578"/>
</dbReference>
<dbReference type="PDB" id="6QG1">
    <property type="method" value="EM"/>
    <property type="resolution" value="4.20 A"/>
    <property type="chains" value="E/F=1-578"/>
</dbReference>
<dbReference type="PDB" id="6QG2">
    <property type="method" value="EM"/>
    <property type="resolution" value="4.60 A"/>
    <property type="chains" value="E/F=1-578"/>
</dbReference>
<dbReference type="PDB" id="6QG3">
    <property type="method" value="EM"/>
    <property type="resolution" value="9.40 A"/>
    <property type="chains" value="E/F=1-578"/>
</dbReference>
<dbReference type="PDB" id="6QG5">
    <property type="method" value="EM"/>
    <property type="resolution" value="10.10 A"/>
    <property type="chains" value="E/F=1-578"/>
</dbReference>
<dbReference type="PDB" id="6QG6">
    <property type="method" value="EM"/>
    <property type="resolution" value="4.65 A"/>
    <property type="chains" value="E/F=1-578"/>
</dbReference>
<dbReference type="PDBsum" id="6I3M"/>
<dbReference type="PDBsum" id="6I7T"/>
<dbReference type="PDBsum" id="6QG0"/>
<dbReference type="PDBsum" id="6QG1"/>
<dbReference type="PDBsum" id="6QG2"/>
<dbReference type="PDBsum" id="6QG3"/>
<dbReference type="PDBsum" id="6QG5"/>
<dbReference type="PDBsum" id="6QG6"/>
<dbReference type="EMDB" id="EMD-4404"/>
<dbReference type="EMDB" id="EMD-4428"/>
<dbReference type="EMDB" id="EMD-4543"/>
<dbReference type="EMDB" id="EMD-4544"/>
<dbReference type="EMDB" id="EMD-4545"/>
<dbReference type="EMDB" id="EMD-4546"/>
<dbReference type="EMDB" id="EMD-4547"/>
<dbReference type="EMDB" id="EMD-4548"/>
<dbReference type="SMR" id="P09032"/>
<dbReference type="BioGRID" id="34650">
    <property type="interactions" value="410"/>
</dbReference>
<dbReference type="ComplexPortal" id="CPX-429">
    <property type="entry name" value="Eukaryotic translation initiation factor 2B complex"/>
</dbReference>
<dbReference type="DIP" id="DIP-1327N"/>
<dbReference type="FunCoup" id="P09032">
    <property type="interactions" value="612"/>
</dbReference>
<dbReference type="IntAct" id="P09032">
    <property type="interactions" value="18"/>
</dbReference>
<dbReference type="MINT" id="P09032"/>
<dbReference type="STRING" id="4932.YOR260W"/>
<dbReference type="iPTMnet" id="P09032"/>
<dbReference type="PaxDb" id="4932-YOR260W"/>
<dbReference type="PeptideAtlas" id="P09032"/>
<dbReference type="EnsemblFungi" id="YOR260W_mRNA">
    <property type="protein sequence ID" value="YOR260W"/>
    <property type="gene ID" value="YOR260W"/>
</dbReference>
<dbReference type="GeneID" id="854434"/>
<dbReference type="KEGG" id="sce:YOR260W"/>
<dbReference type="AGR" id="SGD:S000005786"/>
<dbReference type="SGD" id="S000005786">
    <property type="gene designation" value="GCD1"/>
</dbReference>
<dbReference type="VEuPathDB" id="FungiDB:YOR260W"/>
<dbReference type="eggNOG" id="KOG1462">
    <property type="taxonomic scope" value="Eukaryota"/>
</dbReference>
<dbReference type="GeneTree" id="ENSGT00510000047486"/>
<dbReference type="HOGENOM" id="CLU_016743_3_0_1"/>
<dbReference type="InParanoid" id="P09032"/>
<dbReference type="OMA" id="IRTQMCW"/>
<dbReference type="OrthoDB" id="10250549at2759"/>
<dbReference type="BioCyc" id="YEAST:G3O-33751-MONOMER"/>
<dbReference type="Reactome" id="R-SCE-72731">
    <property type="pathway name" value="Recycling of eIF2:GDP"/>
</dbReference>
<dbReference type="BioGRID-ORCS" id="854434">
    <property type="hits" value="9 hits in 10 CRISPR screens"/>
</dbReference>
<dbReference type="PRO" id="PR:P09032"/>
<dbReference type="Proteomes" id="UP000002311">
    <property type="component" value="Chromosome XV"/>
</dbReference>
<dbReference type="RNAct" id="P09032">
    <property type="molecule type" value="protein"/>
</dbReference>
<dbReference type="GO" id="GO:0005829">
    <property type="term" value="C:cytosol"/>
    <property type="evidence" value="ECO:0007005"/>
    <property type="project" value="SGD"/>
</dbReference>
<dbReference type="GO" id="GO:0005851">
    <property type="term" value="C:eukaryotic translation initiation factor 2B complex"/>
    <property type="evidence" value="ECO:0000314"/>
    <property type="project" value="SGD"/>
</dbReference>
<dbReference type="GO" id="GO:0032045">
    <property type="term" value="C:guanyl-nucleotide exchange factor complex"/>
    <property type="evidence" value="ECO:0000314"/>
    <property type="project" value="ComplexPortal"/>
</dbReference>
<dbReference type="GO" id="GO:0003743">
    <property type="term" value="F:translation initiation factor activity"/>
    <property type="evidence" value="ECO:0000315"/>
    <property type="project" value="SGD"/>
</dbReference>
<dbReference type="GO" id="GO:0002183">
    <property type="term" value="P:cytoplasmic translational initiation"/>
    <property type="evidence" value="ECO:0000250"/>
    <property type="project" value="UniProtKB"/>
</dbReference>
<dbReference type="GO" id="GO:1903574">
    <property type="term" value="P:negative regulation of cellular response to amino acid starvation"/>
    <property type="evidence" value="ECO:0000315"/>
    <property type="project" value="SGD"/>
</dbReference>
<dbReference type="GO" id="GO:0006446">
    <property type="term" value="P:regulation of translational initiation"/>
    <property type="evidence" value="ECO:0000314"/>
    <property type="project" value="SGD"/>
</dbReference>
<dbReference type="CDD" id="cd04198">
    <property type="entry name" value="eIF-2B_gamma_N"/>
    <property type="match status" value="1"/>
</dbReference>
<dbReference type="CDD" id="cd04652">
    <property type="entry name" value="LbH_eIF2B_gamma_C"/>
    <property type="match status" value="1"/>
</dbReference>
<dbReference type="FunFam" id="3.90.550.10:FF:000247">
    <property type="entry name" value="Gamma subunit"/>
    <property type="match status" value="1"/>
</dbReference>
<dbReference type="FunFam" id="2.160.10.10:FF:000045">
    <property type="entry name" value="Translation initiation factor eIF-2B subunit gamma"/>
    <property type="match status" value="1"/>
</dbReference>
<dbReference type="Gene3D" id="2.160.10.10">
    <property type="entry name" value="Hexapeptide repeat proteins"/>
    <property type="match status" value="1"/>
</dbReference>
<dbReference type="Gene3D" id="3.90.550.10">
    <property type="entry name" value="Spore Coat Polysaccharide Biosynthesis Protein SpsA, Chain A"/>
    <property type="match status" value="1"/>
</dbReference>
<dbReference type="InterPro" id="IPR051960">
    <property type="entry name" value="eIF2B_gamma"/>
</dbReference>
<dbReference type="InterPro" id="IPR056818">
    <property type="entry name" value="GlmU/GlgC-like_hexapep"/>
</dbReference>
<dbReference type="InterPro" id="IPR029044">
    <property type="entry name" value="Nucleotide-diphossugar_trans"/>
</dbReference>
<dbReference type="InterPro" id="IPR011004">
    <property type="entry name" value="Trimer_LpxA-like_sf"/>
</dbReference>
<dbReference type="PANTHER" id="PTHR45989">
    <property type="entry name" value="TRANSLATION INITIATION FACTOR EIF-2B SUBUNIT GAMMA"/>
    <property type="match status" value="1"/>
</dbReference>
<dbReference type="PANTHER" id="PTHR45989:SF1">
    <property type="entry name" value="TRANSLATION INITIATION FACTOR EIF-2B SUBUNIT GAMMA"/>
    <property type="match status" value="1"/>
</dbReference>
<dbReference type="Pfam" id="PF24894">
    <property type="entry name" value="Hexapep_GlmU"/>
    <property type="match status" value="1"/>
</dbReference>
<dbReference type="SUPFAM" id="SSF53448">
    <property type="entry name" value="Nucleotide-diphospho-sugar transferases"/>
    <property type="match status" value="1"/>
</dbReference>
<dbReference type="SUPFAM" id="SSF51161">
    <property type="entry name" value="Trimeric LpxA-like enzymes"/>
    <property type="match status" value="1"/>
</dbReference>
<comment type="function">
    <text evidence="1 5 6">Acts as a component of the translation initiation factor 2B (eIF2B) complex, which catalyzes the exchange of GDP for GTP on the eukaryotic initiation factor 2 (eIF2) complex gamma subunit. Its guanine nucleotide exchange factor activity is repressed when bound to eIF2 complex phosphorylated on the alpha subunit, thereby limiting the amount of methionyl-initiator methionine tRNA available to the ribosome and consequently global translation is repressed (By similarity). It activates the synthesis of GCN4 in yeast under amino acid starvation conditions by suppressing the inhibitory effects of multiple AUG codons present in the leader of GCN4 mRNA. It may promote either repression or activation of GCN4 expression depending on amino acid availability. GCD1 stabilizes the interaction between eIF2 and GCD6 and stimulates the catalytic activity in vitro.</text>
</comment>
<comment type="subunit">
    <text evidence="1 4 5 6">Component of the translation initiation factor 2B (eIF2B) complex which is a heterodecamer of two sets of five different subunits: alpha, beta, gamma, delta and epsilon. Subunits alpha, beta and delta comprise a regulatory subcomplex and subunits epsilon and gamma comprise a catalytic subcomplex (PubMed:23775072, PubMed:8506384, PubMed:9472020). Within the complex, the hexameric regulatory complex resides at the center, with the two heterodimeric catalytic subcomplexes bound on opposite sides (By similarity).</text>
</comment>
<comment type="interaction">
    <interactant intactId="EBI-6275">
        <id>P09032</id>
    </interactant>
    <interactant intactId="EBI-6270">
        <id>P32501</id>
        <label>GCD6</label>
    </interactant>
    <organismsDiffer>false</organismsDiffer>
    <experiments>9</experiments>
</comment>
<comment type="interaction">
    <interactant intactId="EBI-6275">
        <id>P09032</id>
    </interactant>
    <interactant intactId="EBI-8920">
        <id>P09064</id>
        <label>SUI3</label>
    </interactant>
    <organismsDiffer>false</organismsDiffer>
    <experiments>4</experiments>
</comment>
<comment type="subcellular location">
    <subcellularLocation>
        <location evidence="1">Cytoplasm</location>
        <location evidence="1">Cytosol</location>
    </subcellularLocation>
</comment>
<comment type="miscellaneous">
    <text evidence="3">Present with 9530 molecules/cell in log phase SD medium.</text>
</comment>
<comment type="similarity">
    <text evidence="7">Belongs to the eIF-2B gamma/epsilon subunits family.</text>
</comment>
<comment type="sequence caution" evidence="7">
    <conflict type="frameshift">
        <sequence resource="EMBL-CDS" id="CAA30693"/>
    </conflict>
</comment>
<gene>
    <name type="primary">GCD1</name>
    <name type="synonym">TIF223</name>
    <name type="synonym">TRA3</name>
    <name type="ordered locus">YOR260W</name>
</gene>
<sequence length="578" mass="65700">MSIQAFVFCGKGSNLAPFTQPDFPFQTQNKDSTAATSGDKLNELVNSALDSTVINEFMQHSTRLPKALLPIGNRPMIEYVLDWCDQADFKEISVVAPVDEIELIESGLTSFLSLRKQQFELIYKALSNSNHSHHLQDPKKINFIPSKANSTGESLQKELLPRINGDFVILPCDFVTDIPPQVLVDQFRNRDDNNLAMTIYYKNSLDSSIDKKQQQKQKQQQFFTVYSENEDSERQPILLDVYSQRDVTKTKYLQIRSHLLWNYPNLTVSTKLLNSFIYFCSFELCQLLKLGPQSMSRQASFKDPFTGNQQQQNPPTTDDDEDRNHDDDDDYKPSATSIQPTYFKKKNDLILDPINCNKSLSKVFRDLSRRSWQHSKPREPIGIFILPNETLFIRANNLNAYMDANRFVLKIKSQTMFTKNIQIQSAAIGADAIVDPKCQISAHSNVKMSVLGTQANIGSRCRVAGSLLFPGVHLGDEVILENCIIGPMAKIGSKCKLSNCYIEGHYVVEPKNNFKGETLANVYLDEDEEDELIYDDSVIAGESEIAEETDSDDRSDEDSDDSEYTDEYEYEDDGLFER</sequence>
<protein>
    <recommendedName>
        <fullName>Translation initiation factor eIF2B subunit gamma</fullName>
    </recommendedName>
    <alternativeName>
        <fullName>GCD complex subunit GCD1</fullName>
    </alternativeName>
    <alternativeName>
        <fullName>Guanine nucleotide exchange factor subunit GCD1</fullName>
    </alternativeName>
    <alternativeName>
        <fullName>eIF2B GDP-GTP exchange factor subunit gamma</fullName>
    </alternativeName>
</protein>
<name>EI2BG_YEAST</name>